<name>RECA_LEIXX</name>
<comment type="function">
    <text evidence="1">Can catalyze the hydrolysis of ATP in the presence of single-stranded DNA, the ATP-dependent uptake of single-stranded DNA by duplex DNA, and the ATP-dependent hybridization of homologous single-stranded DNAs. It interacts with LexA causing its activation and leading to its autocatalytic cleavage.</text>
</comment>
<comment type="subcellular location">
    <subcellularLocation>
        <location evidence="1">Cytoplasm</location>
    </subcellularLocation>
</comment>
<comment type="similarity">
    <text evidence="1">Belongs to the RecA family.</text>
</comment>
<comment type="sequence caution" evidence="2">
    <conflict type="erroneous initiation">
        <sequence resource="EMBL-CDS" id="AAT89396"/>
    </conflict>
</comment>
<feature type="chain" id="PRO_0000122741" description="Protein RecA">
    <location>
        <begin position="1"/>
        <end position="357"/>
    </location>
</feature>
<feature type="binding site" evidence="1">
    <location>
        <begin position="67"/>
        <end position="74"/>
    </location>
    <ligand>
        <name>ATP</name>
        <dbReference type="ChEBI" id="CHEBI:30616"/>
    </ligand>
</feature>
<evidence type="ECO:0000255" key="1">
    <source>
        <dbReference type="HAMAP-Rule" id="MF_00268"/>
    </source>
</evidence>
<evidence type="ECO:0000305" key="2"/>
<organism>
    <name type="scientific">Leifsonia xyli subsp. xyli (strain CTCB07)</name>
    <dbReference type="NCBI Taxonomy" id="281090"/>
    <lineage>
        <taxon>Bacteria</taxon>
        <taxon>Bacillati</taxon>
        <taxon>Actinomycetota</taxon>
        <taxon>Actinomycetes</taxon>
        <taxon>Micrococcales</taxon>
        <taxon>Microbacteriaceae</taxon>
        <taxon>Leifsonia</taxon>
    </lineage>
</organism>
<sequence>MPSPADREKALVTALAQIDRQFGKGSVMRLGSDERAPVEVVPTGSIALDVALGIGGLPRGRIVEIYGPESSGKTTLTLHAIANAQRAGGIAAFIDAEHALDPDYARKLGVDIDALLVSQPDTGEQALEIADMLVRSGSIDLIVIDSVAALVPRAEIEGEMGDAHVGLQARLMSQALRKLTGALSQTNTTMIFINQLREKVGVFFGSPETTAGGKALKFYASVRLDIRRIETLKDGTDAVGNRTRVKVVKNKMAPPFKQAEFDILYGVGISHEGSLLDFGVEHALVKKSGAWYTYEGDQLGQGKENSRNFLIANPDIAAEIENKIKIKLGIVADPNADAEPTAAAGSLEEKLPARKGA</sequence>
<gene>
    <name evidence="1" type="primary">recA</name>
    <name type="ordered locus">Lxx16030</name>
</gene>
<accession>Q6AE00</accession>
<reference key="1">
    <citation type="journal article" date="2004" name="Mol. Plant Microbe Interact.">
        <title>The genome sequence of the Gram-positive sugarcane pathogen Leifsonia xyli subsp. xyli.</title>
        <authorList>
            <person name="Monteiro-Vitorello C.B."/>
            <person name="Camargo L.E.A."/>
            <person name="Van Sluys M.A."/>
            <person name="Kitajima J.P."/>
            <person name="Truffi D."/>
            <person name="do Amaral A.M."/>
            <person name="Harakava R."/>
            <person name="de Oliveira J.C.F."/>
            <person name="Wood D."/>
            <person name="de Oliveira M.C."/>
            <person name="Miyaki C.Y."/>
            <person name="Takita M.A."/>
            <person name="da Silva A.C.R."/>
            <person name="Furlan L.R."/>
            <person name="Carraro D.M."/>
            <person name="Camarotte G."/>
            <person name="Almeida N.F. Jr."/>
            <person name="Carrer H."/>
            <person name="Coutinho L.L."/>
            <person name="El-Dorry H.A."/>
            <person name="Ferro M.I.T."/>
            <person name="Gagliardi P.R."/>
            <person name="Giglioti E."/>
            <person name="Goldman M.H.S."/>
            <person name="Goldman G.H."/>
            <person name="Kimura E.T."/>
            <person name="Ferro E.S."/>
            <person name="Kuramae E.E."/>
            <person name="Lemos E.G.M."/>
            <person name="Lemos M.V.F."/>
            <person name="Mauro S.M.Z."/>
            <person name="Machado M.A."/>
            <person name="Marino C.L."/>
            <person name="Menck C.F."/>
            <person name="Nunes L.R."/>
            <person name="Oliveira R.C."/>
            <person name="Pereira G.G."/>
            <person name="Siqueira W."/>
            <person name="de Souza A.A."/>
            <person name="Tsai S.M."/>
            <person name="Zanca A.S."/>
            <person name="Simpson A.J.G."/>
            <person name="Brumbley S.M."/>
            <person name="Setubal J.C."/>
        </authorList>
    </citation>
    <scope>NUCLEOTIDE SEQUENCE [LARGE SCALE GENOMIC DNA]</scope>
    <source>
        <strain>CTCB07</strain>
    </source>
</reference>
<proteinExistence type="inferred from homology"/>
<dbReference type="EMBL" id="AE016822">
    <property type="protein sequence ID" value="AAT89396.1"/>
    <property type="status" value="ALT_INIT"/>
    <property type="molecule type" value="Genomic_DNA"/>
</dbReference>
<dbReference type="RefSeq" id="WP_041767620.1">
    <property type="nucleotide sequence ID" value="NC_006087.1"/>
</dbReference>
<dbReference type="SMR" id="Q6AE00"/>
<dbReference type="STRING" id="281090.Lxx16030"/>
<dbReference type="KEGG" id="lxx:Lxx16030"/>
<dbReference type="eggNOG" id="COG0468">
    <property type="taxonomic scope" value="Bacteria"/>
</dbReference>
<dbReference type="HOGENOM" id="CLU_040469_3_2_11"/>
<dbReference type="Proteomes" id="UP000001306">
    <property type="component" value="Chromosome"/>
</dbReference>
<dbReference type="GO" id="GO:0005829">
    <property type="term" value="C:cytosol"/>
    <property type="evidence" value="ECO:0007669"/>
    <property type="project" value="TreeGrafter"/>
</dbReference>
<dbReference type="GO" id="GO:0005524">
    <property type="term" value="F:ATP binding"/>
    <property type="evidence" value="ECO:0007669"/>
    <property type="project" value="UniProtKB-UniRule"/>
</dbReference>
<dbReference type="GO" id="GO:0016887">
    <property type="term" value="F:ATP hydrolysis activity"/>
    <property type="evidence" value="ECO:0007669"/>
    <property type="project" value="InterPro"/>
</dbReference>
<dbReference type="GO" id="GO:0140664">
    <property type="term" value="F:ATP-dependent DNA damage sensor activity"/>
    <property type="evidence" value="ECO:0007669"/>
    <property type="project" value="InterPro"/>
</dbReference>
<dbReference type="GO" id="GO:0003684">
    <property type="term" value="F:damaged DNA binding"/>
    <property type="evidence" value="ECO:0007669"/>
    <property type="project" value="UniProtKB-UniRule"/>
</dbReference>
<dbReference type="GO" id="GO:0003697">
    <property type="term" value="F:single-stranded DNA binding"/>
    <property type="evidence" value="ECO:0007669"/>
    <property type="project" value="UniProtKB-UniRule"/>
</dbReference>
<dbReference type="GO" id="GO:0006310">
    <property type="term" value="P:DNA recombination"/>
    <property type="evidence" value="ECO:0007669"/>
    <property type="project" value="UniProtKB-UniRule"/>
</dbReference>
<dbReference type="GO" id="GO:0006281">
    <property type="term" value="P:DNA repair"/>
    <property type="evidence" value="ECO:0007669"/>
    <property type="project" value="UniProtKB-UniRule"/>
</dbReference>
<dbReference type="GO" id="GO:0009432">
    <property type="term" value="P:SOS response"/>
    <property type="evidence" value="ECO:0007669"/>
    <property type="project" value="UniProtKB-UniRule"/>
</dbReference>
<dbReference type="CDD" id="cd00983">
    <property type="entry name" value="RecA"/>
    <property type="match status" value="1"/>
</dbReference>
<dbReference type="FunFam" id="3.40.50.300:FF:000087">
    <property type="entry name" value="Recombinase RecA"/>
    <property type="match status" value="1"/>
</dbReference>
<dbReference type="Gene3D" id="3.40.50.300">
    <property type="entry name" value="P-loop containing nucleotide triphosphate hydrolases"/>
    <property type="match status" value="1"/>
</dbReference>
<dbReference type="HAMAP" id="MF_00268">
    <property type="entry name" value="RecA"/>
    <property type="match status" value="1"/>
</dbReference>
<dbReference type="InterPro" id="IPR003593">
    <property type="entry name" value="AAA+_ATPase"/>
</dbReference>
<dbReference type="InterPro" id="IPR013765">
    <property type="entry name" value="DNA_recomb/repair_RecA"/>
</dbReference>
<dbReference type="InterPro" id="IPR020584">
    <property type="entry name" value="DNA_recomb/repair_RecA_CS"/>
</dbReference>
<dbReference type="InterPro" id="IPR027417">
    <property type="entry name" value="P-loop_NTPase"/>
</dbReference>
<dbReference type="InterPro" id="IPR049261">
    <property type="entry name" value="RecA-like_C"/>
</dbReference>
<dbReference type="InterPro" id="IPR049428">
    <property type="entry name" value="RecA-like_N"/>
</dbReference>
<dbReference type="InterPro" id="IPR020588">
    <property type="entry name" value="RecA_ATP-bd"/>
</dbReference>
<dbReference type="InterPro" id="IPR023400">
    <property type="entry name" value="RecA_C_sf"/>
</dbReference>
<dbReference type="InterPro" id="IPR020587">
    <property type="entry name" value="RecA_monomer-monomer_interface"/>
</dbReference>
<dbReference type="NCBIfam" id="TIGR02012">
    <property type="entry name" value="tigrfam_recA"/>
    <property type="match status" value="1"/>
</dbReference>
<dbReference type="PANTHER" id="PTHR45900:SF1">
    <property type="entry name" value="MITOCHONDRIAL DNA REPAIR PROTEIN RECA HOMOLOG-RELATED"/>
    <property type="match status" value="1"/>
</dbReference>
<dbReference type="PANTHER" id="PTHR45900">
    <property type="entry name" value="RECA"/>
    <property type="match status" value="1"/>
</dbReference>
<dbReference type="Pfam" id="PF00154">
    <property type="entry name" value="RecA"/>
    <property type="match status" value="1"/>
</dbReference>
<dbReference type="Pfam" id="PF21096">
    <property type="entry name" value="RecA_C"/>
    <property type="match status" value="1"/>
</dbReference>
<dbReference type="PRINTS" id="PR00142">
    <property type="entry name" value="RECA"/>
</dbReference>
<dbReference type="SMART" id="SM00382">
    <property type="entry name" value="AAA"/>
    <property type="match status" value="1"/>
</dbReference>
<dbReference type="SUPFAM" id="SSF52540">
    <property type="entry name" value="P-loop containing nucleoside triphosphate hydrolases"/>
    <property type="match status" value="1"/>
</dbReference>
<dbReference type="SUPFAM" id="SSF54752">
    <property type="entry name" value="RecA protein, C-terminal domain"/>
    <property type="match status" value="1"/>
</dbReference>
<dbReference type="PROSITE" id="PS00321">
    <property type="entry name" value="RECA_1"/>
    <property type="match status" value="1"/>
</dbReference>
<dbReference type="PROSITE" id="PS50162">
    <property type="entry name" value="RECA_2"/>
    <property type="match status" value="1"/>
</dbReference>
<dbReference type="PROSITE" id="PS50163">
    <property type="entry name" value="RECA_3"/>
    <property type="match status" value="1"/>
</dbReference>
<keyword id="KW-0067">ATP-binding</keyword>
<keyword id="KW-0963">Cytoplasm</keyword>
<keyword id="KW-0227">DNA damage</keyword>
<keyword id="KW-0233">DNA recombination</keyword>
<keyword id="KW-0234">DNA repair</keyword>
<keyword id="KW-0238">DNA-binding</keyword>
<keyword id="KW-0547">Nucleotide-binding</keyword>
<keyword id="KW-1185">Reference proteome</keyword>
<keyword id="KW-0742">SOS response</keyword>
<protein>
    <recommendedName>
        <fullName evidence="1">Protein RecA</fullName>
    </recommendedName>
    <alternativeName>
        <fullName evidence="1">Recombinase A</fullName>
    </alternativeName>
</protein>